<organism>
    <name type="scientific">Albidiferax ferrireducens (strain ATCC BAA-621 / DSM 15236 / T118)</name>
    <name type="common">Rhodoferax ferrireducens</name>
    <dbReference type="NCBI Taxonomy" id="338969"/>
    <lineage>
        <taxon>Bacteria</taxon>
        <taxon>Pseudomonadati</taxon>
        <taxon>Pseudomonadota</taxon>
        <taxon>Betaproteobacteria</taxon>
        <taxon>Burkholderiales</taxon>
        <taxon>Comamonadaceae</taxon>
        <taxon>Rhodoferax</taxon>
    </lineage>
</organism>
<accession>Q21WX7</accession>
<dbReference type="EC" id="2.4.1.182" evidence="1"/>
<dbReference type="EMBL" id="CP000267">
    <property type="protein sequence ID" value="ABD69726.1"/>
    <property type="molecule type" value="Genomic_DNA"/>
</dbReference>
<dbReference type="RefSeq" id="WP_011464294.1">
    <property type="nucleotide sequence ID" value="NC_007908.1"/>
</dbReference>
<dbReference type="SMR" id="Q21WX7"/>
<dbReference type="STRING" id="338969.Rfer_2001"/>
<dbReference type="CAZy" id="GT19">
    <property type="family name" value="Glycosyltransferase Family 19"/>
</dbReference>
<dbReference type="KEGG" id="rfr:Rfer_2001"/>
<dbReference type="eggNOG" id="COG0763">
    <property type="taxonomic scope" value="Bacteria"/>
</dbReference>
<dbReference type="HOGENOM" id="CLU_036577_3_0_4"/>
<dbReference type="UniPathway" id="UPA00973"/>
<dbReference type="Proteomes" id="UP000008332">
    <property type="component" value="Chromosome"/>
</dbReference>
<dbReference type="GO" id="GO:0016020">
    <property type="term" value="C:membrane"/>
    <property type="evidence" value="ECO:0007669"/>
    <property type="project" value="GOC"/>
</dbReference>
<dbReference type="GO" id="GO:0008915">
    <property type="term" value="F:lipid-A-disaccharide synthase activity"/>
    <property type="evidence" value="ECO:0007669"/>
    <property type="project" value="UniProtKB-UniRule"/>
</dbReference>
<dbReference type="GO" id="GO:0005543">
    <property type="term" value="F:phospholipid binding"/>
    <property type="evidence" value="ECO:0007669"/>
    <property type="project" value="TreeGrafter"/>
</dbReference>
<dbReference type="GO" id="GO:0009245">
    <property type="term" value="P:lipid A biosynthetic process"/>
    <property type="evidence" value="ECO:0007669"/>
    <property type="project" value="UniProtKB-UniRule"/>
</dbReference>
<dbReference type="HAMAP" id="MF_00392">
    <property type="entry name" value="LpxB"/>
    <property type="match status" value="1"/>
</dbReference>
<dbReference type="InterPro" id="IPR003835">
    <property type="entry name" value="Glyco_trans_19"/>
</dbReference>
<dbReference type="NCBIfam" id="TIGR00215">
    <property type="entry name" value="lpxB"/>
    <property type="match status" value="1"/>
</dbReference>
<dbReference type="PANTHER" id="PTHR30372">
    <property type="entry name" value="LIPID-A-DISACCHARIDE SYNTHASE"/>
    <property type="match status" value="1"/>
</dbReference>
<dbReference type="PANTHER" id="PTHR30372:SF4">
    <property type="entry name" value="LIPID-A-DISACCHARIDE SYNTHASE, MITOCHONDRIAL-RELATED"/>
    <property type="match status" value="1"/>
</dbReference>
<dbReference type="Pfam" id="PF02684">
    <property type="entry name" value="LpxB"/>
    <property type="match status" value="1"/>
</dbReference>
<dbReference type="SUPFAM" id="SSF53756">
    <property type="entry name" value="UDP-Glycosyltransferase/glycogen phosphorylase"/>
    <property type="match status" value="1"/>
</dbReference>
<protein>
    <recommendedName>
        <fullName evidence="1">Lipid-A-disaccharide synthase</fullName>
        <ecNumber evidence="1">2.4.1.182</ecNumber>
    </recommendedName>
</protein>
<comment type="function">
    <text evidence="1">Condensation of UDP-2,3-diacylglucosamine and 2,3-diacylglucosamine-1-phosphate to form lipid A disaccharide, a precursor of lipid A, a phosphorylated glycolipid that anchors the lipopolysaccharide to the outer membrane of the cell.</text>
</comment>
<comment type="catalytic activity">
    <reaction evidence="1">
        <text>a lipid X + a UDP-2-N,3-O-bis[(3R)-3-hydroxyacyl]-alpha-D-glucosamine = a lipid A disaccharide + UDP + H(+)</text>
        <dbReference type="Rhea" id="RHEA:67828"/>
        <dbReference type="ChEBI" id="CHEBI:15378"/>
        <dbReference type="ChEBI" id="CHEBI:58223"/>
        <dbReference type="ChEBI" id="CHEBI:137748"/>
        <dbReference type="ChEBI" id="CHEBI:176338"/>
        <dbReference type="ChEBI" id="CHEBI:176343"/>
        <dbReference type="EC" id="2.4.1.182"/>
    </reaction>
</comment>
<comment type="pathway">
    <text evidence="1">Bacterial outer membrane biogenesis; LPS lipid A biosynthesis.</text>
</comment>
<comment type="similarity">
    <text evidence="1">Belongs to the LpxB family.</text>
</comment>
<feature type="chain" id="PRO_0000255213" description="Lipid-A-disaccharide synthase">
    <location>
        <begin position="1"/>
        <end position="389"/>
    </location>
</feature>
<gene>
    <name evidence="1" type="primary">lpxB</name>
    <name type="ordered locus">Rfer_2001</name>
</gene>
<keyword id="KW-0328">Glycosyltransferase</keyword>
<keyword id="KW-0441">Lipid A biosynthesis</keyword>
<keyword id="KW-0444">Lipid biosynthesis</keyword>
<keyword id="KW-0443">Lipid metabolism</keyword>
<keyword id="KW-1185">Reference proteome</keyword>
<keyword id="KW-0808">Transferase</keyword>
<proteinExistence type="inferred from homology"/>
<reference key="1">
    <citation type="submission" date="2006-02" db="EMBL/GenBank/DDBJ databases">
        <title>Complete sequence of chromosome of Rhodoferax ferrireducens DSM 15236.</title>
        <authorList>
            <person name="Copeland A."/>
            <person name="Lucas S."/>
            <person name="Lapidus A."/>
            <person name="Barry K."/>
            <person name="Detter J.C."/>
            <person name="Glavina del Rio T."/>
            <person name="Hammon N."/>
            <person name="Israni S."/>
            <person name="Pitluck S."/>
            <person name="Brettin T."/>
            <person name="Bruce D."/>
            <person name="Han C."/>
            <person name="Tapia R."/>
            <person name="Gilna P."/>
            <person name="Kiss H."/>
            <person name="Schmutz J."/>
            <person name="Larimer F."/>
            <person name="Land M."/>
            <person name="Kyrpides N."/>
            <person name="Ivanova N."/>
            <person name="Richardson P."/>
        </authorList>
    </citation>
    <scope>NUCLEOTIDE SEQUENCE [LARGE SCALE GENOMIC DNA]</scope>
    <source>
        <strain>ATCC BAA-621 / DSM 15236 / T118</strain>
    </source>
</reference>
<evidence type="ECO:0000255" key="1">
    <source>
        <dbReference type="HAMAP-Rule" id="MF_00392"/>
    </source>
</evidence>
<name>LPXB_ALBFT</name>
<sequence length="389" mass="42730">MANQISQHLQVALVAGETSGDLLAGLLLDGLREQWPLMTAVGIGGPQMARRGLVAWWGHDKLSVHGFGWEVLRRYREIVGIRRQLKTRLLRQQPDVFIGVDAPDFNLDLEQDLKAQGIKTVHFVSPSIWAWRPERVEKIRRSVDHVLCIFPFEPALLARHGIAATYVGHPLANVIPMEPDRSAARAALGLADGDQVVAILPGSRQSEINHLALRFFQAAALINKAHPAIKFIVPAIPALRAGIEHAARASGMQAHLQIIAGQSHTVLAACDVTLIASGTATLEAALFKRPMVIAYRMGWLSWQIMRRKQLQPWVGLPNILCQDFVVPELLQDAATAQALADAVLLWIDAKASHPAKIAALQQKFTALHTELQRDTPRLAAHAIQQVLQG</sequence>